<feature type="signal peptide" evidence="1">
    <location>
        <begin position="1"/>
        <end position="34"/>
    </location>
</feature>
<feature type="chain" id="PRO_0000009265" description="Chaperone protein ClpE">
    <location>
        <begin position="35"/>
        <end position="263"/>
    </location>
</feature>
<feature type="region of interest" description="Disordered" evidence="2">
    <location>
        <begin position="238"/>
        <end position="263"/>
    </location>
</feature>
<feature type="compositionally biased region" description="Polar residues" evidence="2">
    <location>
        <begin position="238"/>
        <end position="255"/>
    </location>
</feature>
<comment type="function">
    <text>Involved in the biogenesis of the CS31A capsule-like antigen.</text>
</comment>
<comment type="subcellular location">
    <subcellularLocation>
        <location>Periplasm</location>
    </subcellularLocation>
</comment>
<comment type="similarity">
    <text evidence="3">Belongs to the periplasmic pilus chaperone family.</text>
</comment>
<protein>
    <recommendedName>
        <fullName>Chaperone protein ClpE</fullName>
    </recommendedName>
</protein>
<gene>
    <name type="primary">clpE</name>
</gene>
<accession>Q05433</accession>
<organism>
    <name type="scientific">Escherichia coli</name>
    <dbReference type="NCBI Taxonomy" id="562"/>
    <lineage>
        <taxon>Bacteria</taxon>
        <taxon>Pseudomonadati</taxon>
        <taxon>Pseudomonadota</taxon>
        <taxon>Gammaproteobacteria</taxon>
        <taxon>Enterobacterales</taxon>
        <taxon>Enterobacteriaceae</taxon>
        <taxon>Escherichia</taxon>
    </lineage>
</organism>
<reference key="1">
    <citation type="journal article" date="1993" name="FEMS Microbiol. Lett.">
        <title>The ClpE protein involved in biogenesis of the CS31A capsule-like antigen is a member of a periplasmic chaperone family in Gram-negative bacteria.</title>
        <authorList>
            <person name="Bertin Y."/>
            <person name="Girardeau J.P."/>
            <person name="der Vartanian M."/>
            <person name="Martin C."/>
        </authorList>
    </citation>
    <scope>NUCLEOTIDE SEQUENCE [GENOMIC DNA]</scope>
</reference>
<dbReference type="EMBL" id="L05180">
    <property type="protein sequence ID" value="AAA23598.1"/>
    <property type="molecule type" value="Genomic_DNA"/>
</dbReference>
<dbReference type="PIR" id="I41172">
    <property type="entry name" value="I41172"/>
</dbReference>
<dbReference type="SMR" id="Q05433"/>
<dbReference type="GO" id="GO:0030288">
    <property type="term" value="C:outer membrane-bounded periplasmic space"/>
    <property type="evidence" value="ECO:0007669"/>
    <property type="project" value="InterPro"/>
</dbReference>
<dbReference type="GO" id="GO:0071555">
    <property type="term" value="P:cell wall organization"/>
    <property type="evidence" value="ECO:0007669"/>
    <property type="project" value="InterPro"/>
</dbReference>
<dbReference type="GO" id="GO:0061077">
    <property type="term" value="P:chaperone-mediated protein folding"/>
    <property type="evidence" value="ECO:0007669"/>
    <property type="project" value="InterPro"/>
</dbReference>
<dbReference type="Gene3D" id="2.60.40.10">
    <property type="entry name" value="Immunoglobulins"/>
    <property type="match status" value="2"/>
</dbReference>
<dbReference type="InterPro" id="IPR013783">
    <property type="entry name" value="Ig-like_fold"/>
</dbReference>
<dbReference type="InterPro" id="IPR008962">
    <property type="entry name" value="PapD-like_sf"/>
</dbReference>
<dbReference type="InterPro" id="IPR050643">
    <property type="entry name" value="Periplasmic_pilus_chap"/>
</dbReference>
<dbReference type="InterPro" id="IPR036316">
    <property type="entry name" value="Pili_assmbl_chap_C_dom_sf"/>
</dbReference>
<dbReference type="InterPro" id="IPR001829">
    <property type="entry name" value="Pili_assmbl_chaperone_bac"/>
</dbReference>
<dbReference type="InterPro" id="IPR018046">
    <property type="entry name" value="Pili_assmbl_chaperone_CS"/>
</dbReference>
<dbReference type="InterPro" id="IPR016147">
    <property type="entry name" value="Pili_assmbl_chaperone_N"/>
</dbReference>
<dbReference type="PANTHER" id="PTHR30251:SF2">
    <property type="entry name" value="FIMBRIAL CHAPERONE YADV-RELATED"/>
    <property type="match status" value="1"/>
</dbReference>
<dbReference type="PANTHER" id="PTHR30251">
    <property type="entry name" value="PILUS ASSEMBLY CHAPERONE"/>
    <property type="match status" value="1"/>
</dbReference>
<dbReference type="Pfam" id="PF00345">
    <property type="entry name" value="PapD_N"/>
    <property type="match status" value="1"/>
</dbReference>
<dbReference type="PRINTS" id="PR00969">
    <property type="entry name" value="CHAPERONPILI"/>
</dbReference>
<dbReference type="SUPFAM" id="SSF49354">
    <property type="entry name" value="PapD-like"/>
    <property type="match status" value="1"/>
</dbReference>
<dbReference type="SUPFAM" id="SSF49584">
    <property type="entry name" value="Periplasmic chaperone C-domain"/>
    <property type="match status" value="1"/>
</dbReference>
<dbReference type="PROSITE" id="PS00635">
    <property type="entry name" value="PILI_CHAPERONE"/>
    <property type="match status" value="1"/>
</dbReference>
<evidence type="ECO:0000255" key="1"/>
<evidence type="ECO:0000256" key="2">
    <source>
        <dbReference type="SAM" id="MobiDB-lite"/>
    </source>
</evidence>
<evidence type="ECO:0000305" key="3"/>
<proteinExistence type="inferred from homology"/>
<keyword id="KW-0143">Chaperone</keyword>
<keyword id="KW-0393">Immunoglobulin domain</keyword>
<keyword id="KW-0574">Periplasm</keyword>
<keyword id="KW-0732">Signal</keyword>
<name>CLPE_ECOLX</name>
<sequence>MSKRNAVTTFFTNRVTKALGMTLALMMTCQSAMASLAADQTRYIFRGDKDALTITVTNNDKERTFGGQAWVDNIVEKDTRPTFVVTPSFFKVKPNGQQTLRIIMASDHLPKDKESVYWLNLQDIPPALEGSGIAVAVRTKLKLFYRPKALIEGRKGAEEGISLQSRPDGRTMLVNTTPYIFAIGSLLDGNGKRIATDNETAQKLLMFMPGDEVQVKGNVVKVDSLNDYGELQTWTINQKKTPTSSGQKASDSLVNPSDKADKK</sequence>